<gene>
    <name evidence="1" type="primary">metN2</name>
    <name type="ordered locus">RHA1_ro01757</name>
</gene>
<name>METN2_RHOJR</name>
<protein>
    <recommendedName>
        <fullName evidence="1">Methionine import ATP-binding protein MetN 2</fullName>
        <ecNumber evidence="1">7.4.2.11</ecNumber>
    </recommendedName>
</protein>
<evidence type="ECO:0000255" key="1">
    <source>
        <dbReference type="HAMAP-Rule" id="MF_01719"/>
    </source>
</evidence>
<organism>
    <name type="scientific">Rhodococcus jostii (strain RHA1)</name>
    <dbReference type="NCBI Taxonomy" id="101510"/>
    <lineage>
        <taxon>Bacteria</taxon>
        <taxon>Bacillati</taxon>
        <taxon>Actinomycetota</taxon>
        <taxon>Actinomycetes</taxon>
        <taxon>Mycobacteriales</taxon>
        <taxon>Nocardiaceae</taxon>
        <taxon>Rhodococcus</taxon>
    </lineage>
</organism>
<feature type="chain" id="PRO_0000270369" description="Methionine import ATP-binding protein MetN 2">
    <location>
        <begin position="1"/>
        <end position="340"/>
    </location>
</feature>
<feature type="domain" description="ABC transporter" evidence="1">
    <location>
        <begin position="5"/>
        <end position="244"/>
    </location>
</feature>
<feature type="binding site" evidence="1">
    <location>
        <begin position="41"/>
        <end position="48"/>
    </location>
    <ligand>
        <name>ATP</name>
        <dbReference type="ChEBI" id="CHEBI:30616"/>
    </ligand>
</feature>
<proteinExistence type="inferred from homology"/>
<accession>Q0SFW6</accession>
<comment type="function">
    <text evidence="1">Part of the ABC transporter complex MetNIQ involved in methionine import. Responsible for energy coupling to the transport system.</text>
</comment>
<comment type="catalytic activity">
    <reaction evidence="1">
        <text>L-methionine(out) + ATP + H2O = L-methionine(in) + ADP + phosphate + H(+)</text>
        <dbReference type="Rhea" id="RHEA:29779"/>
        <dbReference type="ChEBI" id="CHEBI:15377"/>
        <dbReference type="ChEBI" id="CHEBI:15378"/>
        <dbReference type="ChEBI" id="CHEBI:30616"/>
        <dbReference type="ChEBI" id="CHEBI:43474"/>
        <dbReference type="ChEBI" id="CHEBI:57844"/>
        <dbReference type="ChEBI" id="CHEBI:456216"/>
        <dbReference type="EC" id="7.4.2.11"/>
    </reaction>
</comment>
<comment type="catalytic activity">
    <reaction evidence="1">
        <text>D-methionine(out) + ATP + H2O = D-methionine(in) + ADP + phosphate + H(+)</text>
        <dbReference type="Rhea" id="RHEA:29767"/>
        <dbReference type="ChEBI" id="CHEBI:15377"/>
        <dbReference type="ChEBI" id="CHEBI:15378"/>
        <dbReference type="ChEBI" id="CHEBI:30616"/>
        <dbReference type="ChEBI" id="CHEBI:43474"/>
        <dbReference type="ChEBI" id="CHEBI:57932"/>
        <dbReference type="ChEBI" id="CHEBI:456216"/>
        <dbReference type="EC" id="7.4.2.11"/>
    </reaction>
</comment>
<comment type="subunit">
    <text evidence="1">The complex is composed of two ATP-binding proteins (MetN), two transmembrane proteins (MetI) and a solute-binding protein (MetQ).</text>
</comment>
<comment type="subcellular location">
    <subcellularLocation>
        <location evidence="1">Cell membrane</location>
        <topology evidence="1">Peripheral membrane protein</topology>
    </subcellularLocation>
</comment>
<comment type="similarity">
    <text evidence="1">Belongs to the ABC transporter superfamily. Methionine importer (TC 3.A.1.24) family.</text>
</comment>
<reference key="1">
    <citation type="journal article" date="2006" name="Proc. Natl. Acad. Sci. U.S.A.">
        <title>The complete genome of Rhodococcus sp. RHA1 provides insights into a catabolic powerhouse.</title>
        <authorList>
            <person name="McLeod M.P."/>
            <person name="Warren R.L."/>
            <person name="Hsiao W.W.L."/>
            <person name="Araki N."/>
            <person name="Myhre M."/>
            <person name="Fernandes C."/>
            <person name="Miyazawa D."/>
            <person name="Wong W."/>
            <person name="Lillquist A.L."/>
            <person name="Wang D."/>
            <person name="Dosanjh M."/>
            <person name="Hara H."/>
            <person name="Petrescu A."/>
            <person name="Morin R.D."/>
            <person name="Yang G."/>
            <person name="Stott J.M."/>
            <person name="Schein J.E."/>
            <person name="Shin H."/>
            <person name="Smailus D."/>
            <person name="Siddiqui A.S."/>
            <person name="Marra M.A."/>
            <person name="Jones S.J.M."/>
            <person name="Holt R."/>
            <person name="Brinkman F.S.L."/>
            <person name="Miyauchi K."/>
            <person name="Fukuda M."/>
            <person name="Davies J.E."/>
            <person name="Mohn W.W."/>
            <person name="Eltis L.D."/>
        </authorList>
    </citation>
    <scope>NUCLEOTIDE SEQUENCE [LARGE SCALE GENOMIC DNA]</scope>
    <source>
        <strain>RHA1</strain>
    </source>
</reference>
<sequence length="340" mass="37066">MTPIVRFESVTKTFSSGKKTLTAVDAVDLTIERGEIFGVIGYSGAGKSTLVRLINGLERPTSGRVVVDDVDITALSESKLRHVRAKIGMIFQQFNLFRSRTVAGNVAYPLVVAGWPRQKRRERVAELLEFVGLSDKARAYPDQLSGGQKQRVGIARALATSPDLLLADESTSALDPETTQDVLRLLRKVNRELGVTIVVITHEMDVVRAVADRVAVLAEGRVVELGTVFDVFSEPQAPASKSFVSTILRNRPEPADLERLRSRFGGRIVTADVRDGSRIGDVLSDAGGHGVRFEIVYGGITTLQDRSFGSLTLELVGPDDGVDDVIRRLRTVTDVEEVQA</sequence>
<dbReference type="EC" id="7.4.2.11" evidence="1"/>
<dbReference type="EMBL" id="CP000431">
    <property type="protein sequence ID" value="ABG93570.1"/>
    <property type="molecule type" value="Genomic_DNA"/>
</dbReference>
<dbReference type="RefSeq" id="WP_011594689.1">
    <property type="nucleotide sequence ID" value="NC_008268.1"/>
</dbReference>
<dbReference type="SMR" id="Q0SFW6"/>
<dbReference type="KEGG" id="rha:RHA1_ro01757"/>
<dbReference type="PATRIC" id="fig|101510.16.peg.1774"/>
<dbReference type="eggNOG" id="COG1135">
    <property type="taxonomic scope" value="Bacteria"/>
</dbReference>
<dbReference type="HOGENOM" id="CLU_000604_1_3_11"/>
<dbReference type="OrthoDB" id="4398079at2"/>
<dbReference type="Proteomes" id="UP000008710">
    <property type="component" value="Chromosome"/>
</dbReference>
<dbReference type="GO" id="GO:0005886">
    <property type="term" value="C:plasma membrane"/>
    <property type="evidence" value="ECO:0007669"/>
    <property type="project" value="UniProtKB-SubCell"/>
</dbReference>
<dbReference type="GO" id="GO:0033232">
    <property type="term" value="F:ABC-type D-methionine transporter activity"/>
    <property type="evidence" value="ECO:0007669"/>
    <property type="project" value="UniProtKB-EC"/>
</dbReference>
<dbReference type="GO" id="GO:0005524">
    <property type="term" value="F:ATP binding"/>
    <property type="evidence" value="ECO:0007669"/>
    <property type="project" value="UniProtKB-KW"/>
</dbReference>
<dbReference type="GO" id="GO:0016887">
    <property type="term" value="F:ATP hydrolysis activity"/>
    <property type="evidence" value="ECO:0007669"/>
    <property type="project" value="InterPro"/>
</dbReference>
<dbReference type="CDD" id="cd03258">
    <property type="entry name" value="ABC_MetN_methionine_transporter"/>
    <property type="match status" value="1"/>
</dbReference>
<dbReference type="FunFam" id="3.40.50.300:FF:000056">
    <property type="entry name" value="Cell division ATP-binding protein FtsE"/>
    <property type="match status" value="1"/>
</dbReference>
<dbReference type="Gene3D" id="3.30.70.260">
    <property type="match status" value="1"/>
</dbReference>
<dbReference type="Gene3D" id="3.40.50.300">
    <property type="entry name" value="P-loop containing nucleotide triphosphate hydrolases"/>
    <property type="match status" value="1"/>
</dbReference>
<dbReference type="InterPro" id="IPR003593">
    <property type="entry name" value="AAA+_ATPase"/>
</dbReference>
<dbReference type="InterPro" id="IPR003439">
    <property type="entry name" value="ABC_transporter-like_ATP-bd"/>
</dbReference>
<dbReference type="InterPro" id="IPR017871">
    <property type="entry name" value="ABC_transporter-like_CS"/>
</dbReference>
<dbReference type="InterPro" id="IPR045865">
    <property type="entry name" value="ACT-like_dom_sf"/>
</dbReference>
<dbReference type="InterPro" id="IPR041701">
    <property type="entry name" value="MetN_ABC"/>
</dbReference>
<dbReference type="InterPro" id="IPR050086">
    <property type="entry name" value="MetN_ABC_transporter-like"/>
</dbReference>
<dbReference type="InterPro" id="IPR018449">
    <property type="entry name" value="NIL_domain"/>
</dbReference>
<dbReference type="InterPro" id="IPR027417">
    <property type="entry name" value="P-loop_NTPase"/>
</dbReference>
<dbReference type="PANTHER" id="PTHR43166">
    <property type="entry name" value="AMINO ACID IMPORT ATP-BINDING PROTEIN"/>
    <property type="match status" value="1"/>
</dbReference>
<dbReference type="PANTHER" id="PTHR43166:SF30">
    <property type="entry name" value="METHIONINE IMPORT ATP-BINDING PROTEIN METN"/>
    <property type="match status" value="1"/>
</dbReference>
<dbReference type="Pfam" id="PF00005">
    <property type="entry name" value="ABC_tran"/>
    <property type="match status" value="1"/>
</dbReference>
<dbReference type="Pfam" id="PF09383">
    <property type="entry name" value="NIL"/>
    <property type="match status" value="1"/>
</dbReference>
<dbReference type="SMART" id="SM00382">
    <property type="entry name" value="AAA"/>
    <property type="match status" value="1"/>
</dbReference>
<dbReference type="SMART" id="SM00930">
    <property type="entry name" value="NIL"/>
    <property type="match status" value="1"/>
</dbReference>
<dbReference type="SUPFAM" id="SSF55021">
    <property type="entry name" value="ACT-like"/>
    <property type="match status" value="1"/>
</dbReference>
<dbReference type="SUPFAM" id="SSF52540">
    <property type="entry name" value="P-loop containing nucleoside triphosphate hydrolases"/>
    <property type="match status" value="1"/>
</dbReference>
<dbReference type="PROSITE" id="PS00211">
    <property type="entry name" value="ABC_TRANSPORTER_1"/>
    <property type="match status" value="1"/>
</dbReference>
<dbReference type="PROSITE" id="PS50893">
    <property type="entry name" value="ABC_TRANSPORTER_2"/>
    <property type="match status" value="1"/>
</dbReference>
<dbReference type="PROSITE" id="PS51264">
    <property type="entry name" value="METN"/>
    <property type="match status" value="1"/>
</dbReference>
<keyword id="KW-0029">Amino-acid transport</keyword>
<keyword id="KW-0067">ATP-binding</keyword>
<keyword id="KW-1003">Cell membrane</keyword>
<keyword id="KW-0472">Membrane</keyword>
<keyword id="KW-0547">Nucleotide-binding</keyword>
<keyword id="KW-1278">Translocase</keyword>
<keyword id="KW-0813">Transport</keyword>